<gene>
    <name evidence="1" type="primary">glmM</name>
    <name type="ordered locus">sce5789</name>
</gene>
<dbReference type="EC" id="5.4.2.10" evidence="1"/>
<dbReference type="EMBL" id="AM746676">
    <property type="protein sequence ID" value="CAN95952.1"/>
    <property type="molecule type" value="Genomic_DNA"/>
</dbReference>
<dbReference type="RefSeq" id="WP_012238417.1">
    <property type="nucleotide sequence ID" value="NC_010162.1"/>
</dbReference>
<dbReference type="SMR" id="A9G862"/>
<dbReference type="STRING" id="448385.sce5789"/>
<dbReference type="KEGG" id="scl:sce5789"/>
<dbReference type="eggNOG" id="COG1109">
    <property type="taxonomic scope" value="Bacteria"/>
</dbReference>
<dbReference type="HOGENOM" id="CLU_016950_7_0_7"/>
<dbReference type="OrthoDB" id="9806956at2"/>
<dbReference type="BioCyc" id="SCEL448385:SCE_RS29750-MONOMER"/>
<dbReference type="Proteomes" id="UP000002139">
    <property type="component" value="Chromosome"/>
</dbReference>
<dbReference type="GO" id="GO:0005829">
    <property type="term" value="C:cytosol"/>
    <property type="evidence" value="ECO:0007669"/>
    <property type="project" value="TreeGrafter"/>
</dbReference>
<dbReference type="GO" id="GO:0000287">
    <property type="term" value="F:magnesium ion binding"/>
    <property type="evidence" value="ECO:0007669"/>
    <property type="project" value="UniProtKB-UniRule"/>
</dbReference>
<dbReference type="GO" id="GO:0008966">
    <property type="term" value="F:phosphoglucosamine mutase activity"/>
    <property type="evidence" value="ECO:0007669"/>
    <property type="project" value="UniProtKB-UniRule"/>
</dbReference>
<dbReference type="GO" id="GO:0004615">
    <property type="term" value="F:phosphomannomutase activity"/>
    <property type="evidence" value="ECO:0007669"/>
    <property type="project" value="TreeGrafter"/>
</dbReference>
<dbReference type="GO" id="GO:0005975">
    <property type="term" value="P:carbohydrate metabolic process"/>
    <property type="evidence" value="ECO:0007669"/>
    <property type="project" value="InterPro"/>
</dbReference>
<dbReference type="GO" id="GO:0009252">
    <property type="term" value="P:peptidoglycan biosynthetic process"/>
    <property type="evidence" value="ECO:0007669"/>
    <property type="project" value="TreeGrafter"/>
</dbReference>
<dbReference type="GO" id="GO:0006048">
    <property type="term" value="P:UDP-N-acetylglucosamine biosynthetic process"/>
    <property type="evidence" value="ECO:0007669"/>
    <property type="project" value="TreeGrafter"/>
</dbReference>
<dbReference type="CDD" id="cd05802">
    <property type="entry name" value="GlmM"/>
    <property type="match status" value="1"/>
</dbReference>
<dbReference type="FunFam" id="3.40.120.10:FF:000001">
    <property type="entry name" value="Phosphoglucosamine mutase"/>
    <property type="match status" value="1"/>
</dbReference>
<dbReference type="FunFam" id="3.40.120.10:FF:000002">
    <property type="entry name" value="Phosphoglucosamine mutase"/>
    <property type="match status" value="1"/>
</dbReference>
<dbReference type="Gene3D" id="3.40.120.10">
    <property type="entry name" value="Alpha-D-Glucose-1,6-Bisphosphate, subunit A, domain 3"/>
    <property type="match status" value="3"/>
</dbReference>
<dbReference type="Gene3D" id="3.30.310.50">
    <property type="entry name" value="Alpha-D-phosphohexomutase, C-terminal domain"/>
    <property type="match status" value="1"/>
</dbReference>
<dbReference type="HAMAP" id="MF_01554_B">
    <property type="entry name" value="GlmM_B"/>
    <property type="match status" value="1"/>
</dbReference>
<dbReference type="InterPro" id="IPR005844">
    <property type="entry name" value="A-D-PHexomutase_a/b/a-I"/>
</dbReference>
<dbReference type="InterPro" id="IPR016055">
    <property type="entry name" value="A-D-PHexomutase_a/b/a-I/II/III"/>
</dbReference>
<dbReference type="InterPro" id="IPR005845">
    <property type="entry name" value="A-D-PHexomutase_a/b/a-II"/>
</dbReference>
<dbReference type="InterPro" id="IPR005846">
    <property type="entry name" value="A-D-PHexomutase_a/b/a-III"/>
</dbReference>
<dbReference type="InterPro" id="IPR005843">
    <property type="entry name" value="A-D-PHexomutase_C"/>
</dbReference>
<dbReference type="InterPro" id="IPR036900">
    <property type="entry name" value="A-D-PHexomutase_C_sf"/>
</dbReference>
<dbReference type="InterPro" id="IPR016066">
    <property type="entry name" value="A-D-PHexomutase_CS"/>
</dbReference>
<dbReference type="InterPro" id="IPR005841">
    <property type="entry name" value="Alpha-D-phosphohexomutase_SF"/>
</dbReference>
<dbReference type="InterPro" id="IPR006352">
    <property type="entry name" value="GlmM_bact"/>
</dbReference>
<dbReference type="InterPro" id="IPR050060">
    <property type="entry name" value="Phosphoglucosamine_mutase"/>
</dbReference>
<dbReference type="NCBIfam" id="TIGR01455">
    <property type="entry name" value="glmM"/>
    <property type="match status" value="1"/>
</dbReference>
<dbReference type="NCBIfam" id="NF008139">
    <property type="entry name" value="PRK10887.1"/>
    <property type="match status" value="1"/>
</dbReference>
<dbReference type="PANTHER" id="PTHR42946:SF1">
    <property type="entry name" value="PHOSPHOGLUCOMUTASE (ALPHA-D-GLUCOSE-1,6-BISPHOSPHATE-DEPENDENT)"/>
    <property type="match status" value="1"/>
</dbReference>
<dbReference type="PANTHER" id="PTHR42946">
    <property type="entry name" value="PHOSPHOHEXOSE MUTASE"/>
    <property type="match status" value="1"/>
</dbReference>
<dbReference type="Pfam" id="PF02878">
    <property type="entry name" value="PGM_PMM_I"/>
    <property type="match status" value="1"/>
</dbReference>
<dbReference type="Pfam" id="PF02879">
    <property type="entry name" value="PGM_PMM_II"/>
    <property type="match status" value="1"/>
</dbReference>
<dbReference type="Pfam" id="PF02880">
    <property type="entry name" value="PGM_PMM_III"/>
    <property type="match status" value="1"/>
</dbReference>
<dbReference type="Pfam" id="PF00408">
    <property type="entry name" value="PGM_PMM_IV"/>
    <property type="match status" value="1"/>
</dbReference>
<dbReference type="PRINTS" id="PR00509">
    <property type="entry name" value="PGMPMM"/>
</dbReference>
<dbReference type="SUPFAM" id="SSF55957">
    <property type="entry name" value="Phosphoglucomutase, C-terminal domain"/>
    <property type="match status" value="1"/>
</dbReference>
<dbReference type="SUPFAM" id="SSF53738">
    <property type="entry name" value="Phosphoglucomutase, first 3 domains"/>
    <property type="match status" value="3"/>
</dbReference>
<dbReference type="PROSITE" id="PS00710">
    <property type="entry name" value="PGM_PMM"/>
    <property type="match status" value="1"/>
</dbReference>
<sequence length="480" mass="51042">MPKHTKKDPREGAPSATGEPQKQAAGRKLFGTDGVRGVANQPPMTPEMALRLGRAIAFVASHGKSRQVRVVIGKDTRLSGYMLETAIASGVCAMGGRVMLSGPIPTPAVAQLTQSMRADAGVVISASHNPYQDNGIKIFGPDGYKLPDTAEEEIERLMESHELDEARVVGAAIGSAVKLDDARGRYVVFCKNTFPTALSLDGVKIVVDAAHGAAYRVAPSVFTELGANVTALGVKPNGRNINRETGALHPEHVKAEVLKRGAAIGIALDGDADRVIMVDERGEVVDGDAIMALCALRMLRTGKLPRNTIVTTVMSNLGLERALKAQSGHVVRTAVGDRYVVEAMRNGGYSFGGEQSGHLIFLDHATTGDGIVAALQVLAIMMEEDKPLSELASKAMQRVPQVLENATFATRLPLDSMQRTRVTVDRIEKTLGDKGRILVRWSGTEPKLRVMVEGEDASTIGAYALEIIEAAKQDVAGASA</sequence>
<organism>
    <name type="scientific">Sorangium cellulosum (strain So ce56)</name>
    <name type="common">Polyangium cellulosum (strain So ce56)</name>
    <dbReference type="NCBI Taxonomy" id="448385"/>
    <lineage>
        <taxon>Bacteria</taxon>
        <taxon>Pseudomonadati</taxon>
        <taxon>Myxococcota</taxon>
        <taxon>Polyangia</taxon>
        <taxon>Polyangiales</taxon>
        <taxon>Polyangiaceae</taxon>
        <taxon>Sorangium</taxon>
    </lineage>
</organism>
<comment type="function">
    <text evidence="1">Catalyzes the conversion of glucosamine-6-phosphate to glucosamine-1-phosphate.</text>
</comment>
<comment type="catalytic activity">
    <reaction evidence="1">
        <text>alpha-D-glucosamine 1-phosphate = D-glucosamine 6-phosphate</text>
        <dbReference type="Rhea" id="RHEA:23424"/>
        <dbReference type="ChEBI" id="CHEBI:58516"/>
        <dbReference type="ChEBI" id="CHEBI:58725"/>
        <dbReference type="EC" id="5.4.2.10"/>
    </reaction>
</comment>
<comment type="cofactor">
    <cofactor evidence="1">
        <name>Mg(2+)</name>
        <dbReference type="ChEBI" id="CHEBI:18420"/>
    </cofactor>
    <text evidence="1">Binds 1 Mg(2+) ion per subunit.</text>
</comment>
<comment type="PTM">
    <text evidence="1">Activated by phosphorylation.</text>
</comment>
<comment type="similarity">
    <text evidence="1">Belongs to the phosphohexose mutase family.</text>
</comment>
<protein>
    <recommendedName>
        <fullName evidence="1">Phosphoglucosamine mutase</fullName>
        <ecNumber evidence="1">5.4.2.10</ecNumber>
    </recommendedName>
</protein>
<name>GLMM_SORC5</name>
<evidence type="ECO:0000255" key="1">
    <source>
        <dbReference type="HAMAP-Rule" id="MF_01554"/>
    </source>
</evidence>
<evidence type="ECO:0000256" key="2">
    <source>
        <dbReference type="SAM" id="MobiDB-lite"/>
    </source>
</evidence>
<proteinExistence type="inferred from homology"/>
<keyword id="KW-0413">Isomerase</keyword>
<keyword id="KW-0460">Magnesium</keyword>
<keyword id="KW-0479">Metal-binding</keyword>
<keyword id="KW-0597">Phosphoprotein</keyword>
<keyword id="KW-1185">Reference proteome</keyword>
<accession>A9G862</accession>
<reference key="1">
    <citation type="journal article" date="2007" name="Nat. Biotechnol.">
        <title>Complete genome sequence of the myxobacterium Sorangium cellulosum.</title>
        <authorList>
            <person name="Schneiker S."/>
            <person name="Perlova O."/>
            <person name="Kaiser O."/>
            <person name="Gerth K."/>
            <person name="Alici A."/>
            <person name="Altmeyer M.O."/>
            <person name="Bartels D."/>
            <person name="Bekel T."/>
            <person name="Beyer S."/>
            <person name="Bode E."/>
            <person name="Bode H.B."/>
            <person name="Bolten C.J."/>
            <person name="Choudhuri J.V."/>
            <person name="Doss S."/>
            <person name="Elnakady Y.A."/>
            <person name="Frank B."/>
            <person name="Gaigalat L."/>
            <person name="Goesmann A."/>
            <person name="Groeger C."/>
            <person name="Gross F."/>
            <person name="Jelsbak L."/>
            <person name="Jelsbak L."/>
            <person name="Kalinowski J."/>
            <person name="Kegler C."/>
            <person name="Knauber T."/>
            <person name="Konietzny S."/>
            <person name="Kopp M."/>
            <person name="Krause L."/>
            <person name="Krug D."/>
            <person name="Linke B."/>
            <person name="Mahmud T."/>
            <person name="Martinez-Arias R."/>
            <person name="McHardy A.C."/>
            <person name="Merai M."/>
            <person name="Meyer F."/>
            <person name="Mormann S."/>
            <person name="Munoz-Dorado J."/>
            <person name="Perez J."/>
            <person name="Pradella S."/>
            <person name="Rachid S."/>
            <person name="Raddatz G."/>
            <person name="Rosenau F."/>
            <person name="Rueckert C."/>
            <person name="Sasse F."/>
            <person name="Scharfe M."/>
            <person name="Schuster S.C."/>
            <person name="Suen G."/>
            <person name="Treuner-Lange A."/>
            <person name="Velicer G.J."/>
            <person name="Vorholter F.-J."/>
            <person name="Weissman K.J."/>
            <person name="Welch R.D."/>
            <person name="Wenzel S.C."/>
            <person name="Whitworth D.E."/>
            <person name="Wilhelm S."/>
            <person name="Wittmann C."/>
            <person name="Bloecker H."/>
            <person name="Puehler A."/>
            <person name="Mueller R."/>
        </authorList>
    </citation>
    <scope>NUCLEOTIDE SEQUENCE [LARGE SCALE GENOMIC DNA]</scope>
    <source>
        <strain>So ce56</strain>
    </source>
</reference>
<feature type="chain" id="PRO_0000343601" description="Phosphoglucosamine mutase">
    <location>
        <begin position="1"/>
        <end position="480"/>
    </location>
</feature>
<feature type="region of interest" description="Disordered" evidence="2">
    <location>
        <begin position="1"/>
        <end position="41"/>
    </location>
</feature>
<feature type="active site" description="Phosphoserine intermediate" evidence="1">
    <location>
        <position position="127"/>
    </location>
</feature>
<feature type="binding site" description="via phosphate group" evidence="1">
    <location>
        <position position="127"/>
    </location>
    <ligand>
        <name>Mg(2+)</name>
        <dbReference type="ChEBI" id="CHEBI:18420"/>
    </ligand>
</feature>
<feature type="binding site" evidence="1">
    <location>
        <position position="269"/>
    </location>
    <ligand>
        <name>Mg(2+)</name>
        <dbReference type="ChEBI" id="CHEBI:18420"/>
    </ligand>
</feature>
<feature type="binding site" evidence="1">
    <location>
        <position position="271"/>
    </location>
    <ligand>
        <name>Mg(2+)</name>
        <dbReference type="ChEBI" id="CHEBI:18420"/>
    </ligand>
</feature>
<feature type="binding site" evidence="1">
    <location>
        <position position="273"/>
    </location>
    <ligand>
        <name>Mg(2+)</name>
        <dbReference type="ChEBI" id="CHEBI:18420"/>
    </ligand>
</feature>
<feature type="modified residue" description="Phosphoserine" evidence="1">
    <location>
        <position position="127"/>
    </location>
</feature>